<sequence length="84" mass="8979">MTDAANPPADISALSFEEALSQLERIVQELESGQAALERSIDIYERGAALKAHCEKKLEAARLKVEKIVLGQGGAVAAEPAEFN</sequence>
<evidence type="ECO:0000255" key="1">
    <source>
        <dbReference type="HAMAP-Rule" id="MF_00337"/>
    </source>
</evidence>
<feature type="chain" id="PRO_1000200245" description="Exodeoxyribonuclease 7 small subunit">
    <location>
        <begin position="1"/>
        <end position="84"/>
    </location>
</feature>
<gene>
    <name evidence="1" type="primary">xseB</name>
    <name type="ordered locus">CCNA_02151</name>
</gene>
<comment type="function">
    <text evidence="1">Bidirectionally degrades single-stranded DNA into large acid-insoluble oligonucleotides, which are then degraded further into small acid-soluble oligonucleotides.</text>
</comment>
<comment type="catalytic activity">
    <reaction evidence="1">
        <text>Exonucleolytic cleavage in either 5'- to 3'- or 3'- to 5'-direction to yield nucleoside 5'-phosphates.</text>
        <dbReference type="EC" id="3.1.11.6"/>
    </reaction>
</comment>
<comment type="subunit">
    <text evidence="1">Heterooligomer composed of large and small subunits.</text>
</comment>
<comment type="subcellular location">
    <subcellularLocation>
        <location evidence="1">Cytoplasm</location>
    </subcellularLocation>
</comment>
<comment type="similarity">
    <text evidence="1">Belongs to the XseB family.</text>
</comment>
<dbReference type="EC" id="3.1.11.6" evidence="1"/>
<dbReference type="EMBL" id="CP001340">
    <property type="protein sequence ID" value="ACL95616.1"/>
    <property type="molecule type" value="Genomic_DNA"/>
</dbReference>
<dbReference type="RefSeq" id="WP_010919931.1">
    <property type="nucleotide sequence ID" value="NC_011916.1"/>
</dbReference>
<dbReference type="RefSeq" id="YP_002517524.1">
    <property type="nucleotide sequence ID" value="NC_011916.1"/>
</dbReference>
<dbReference type="SMR" id="B8GXC6"/>
<dbReference type="GeneID" id="7333401"/>
<dbReference type="KEGG" id="ccs:CCNA_02151"/>
<dbReference type="PATRIC" id="fig|565050.3.peg.2107"/>
<dbReference type="HOGENOM" id="CLU_145918_0_3_5"/>
<dbReference type="OrthoDB" id="9808145at2"/>
<dbReference type="PhylomeDB" id="B8GXC6"/>
<dbReference type="Proteomes" id="UP000001364">
    <property type="component" value="Chromosome"/>
</dbReference>
<dbReference type="GO" id="GO:0005829">
    <property type="term" value="C:cytosol"/>
    <property type="evidence" value="ECO:0007669"/>
    <property type="project" value="TreeGrafter"/>
</dbReference>
<dbReference type="GO" id="GO:0009318">
    <property type="term" value="C:exodeoxyribonuclease VII complex"/>
    <property type="evidence" value="ECO:0007669"/>
    <property type="project" value="InterPro"/>
</dbReference>
<dbReference type="GO" id="GO:0008855">
    <property type="term" value="F:exodeoxyribonuclease VII activity"/>
    <property type="evidence" value="ECO:0007669"/>
    <property type="project" value="UniProtKB-UniRule"/>
</dbReference>
<dbReference type="GO" id="GO:0006308">
    <property type="term" value="P:DNA catabolic process"/>
    <property type="evidence" value="ECO:0007669"/>
    <property type="project" value="UniProtKB-UniRule"/>
</dbReference>
<dbReference type="Gene3D" id="1.10.287.1040">
    <property type="entry name" value="Exonuclease VII, small subunit"/>
    <property type="match status" value="1"/>
</dbReference>
<dbReference type="HAMAP" id="MF_00337">
    <property type="entry name" value="Exonuc_7_S"/>
    <property type="match status" value="1"/>
</dbReference>
<dbReference type="InterPro" id="IPR003761">
    <property type="entry name" value="Exonuc_VII_S"/>
</dbReference>
<dbReference type="InterPro" id="IPR037004">
    <property type="entry name" value="Exonuc_VII_ssu_sf"/>
</dbReference>
<dbReference type="NCBIfam" id="NF002139">
    <property type="entry name" value="PRK00977.1-3"/>
    <property type="match status" value="1"/>
</dbReference>
<dbReference type="NCBIfam" id="TIGR01280">
    <property type="entry name" value="xseB"/>
    <property type="match status" value="1"/>
</dbReference>
<dbReference type="PANTHER" id="PTHR34137">
    <property type="entry name" value="EXODEOXYRIBONUCLEASE 7 SMALL SUBUNIT"/>
    <property type="match status" value="1"/>
</dbReference>
<dbReference type="PANTHER" id="PTHR34137:SF1">
    <property type="entry name" value="EXODEOXYRIBONUCLEASE 7 SMALL SUBUNIT"/>
    <property type="match status" value="1"/>
</dbReference>
<dbReference type="Pfam" id="PF02609">
    <property type="entry name" value="Exonuc_VII_S"/>
    <property type="match status" value="1"/>
</dbReference>
<dbReference type="SUPFAM" id="SSF116842">
    <property type="entry name" value="XseB-like"/>
    <property type="match status" value="1"/>
</dbReference>
<protein>
    <recommendedName>
        <fullName evidence="1">Exodeoxyribonuclease 7 small subunit</fullName>
        <ecNumber evidence="1">3.1.11.6</ecNumber>
    </recommendedName>
    <alternativeName>
        <fullName evidence="1">Exodeoxyribonuclease VII small subunit</fullName>
        <shortName evidence="1">Exonuclease VII small subunit</shortName>
    </alternativeName>
</protein>
<name>EX7S_CAUVN</name>
<proteinExistence type="inferred from homology"/>
<organism>
    <name type="scientific">Caulobacter vibrioides (strain NA1000 / CB15N)</name>
    <name type="common">Caulobacter crescentus</name>
    <dbReference type="NCBI Taxonomy" id="565050"/>
    <lineage>
        <taxon>Bacteria</taxon>
        <taxon>Pseudomonadati</taxon>
        <taxon>Pseudomonadota</taxon>
        <taxon>Alphaproteobacteria</taxon>
        <taxon>Caulobacterales</taxon>
        <taxon>Caulobacteraceae</taxon>
        <taxon>Caulobacter</taxon>
    </lineage>
</organism>
<keyword id="KW-0963">Cytoplasm</keyword>
<keyword id="KW-0269">Exonuclease</keyword>
<keyword id="KW-0378">Hydrolase</keyword>
<keyword id="KW-0540">Nuclease</keyword>
<keyword id="KW-1185">Reference proteome</keyword>
<reference key="1">
    <citation type="journal article" date="2010" name="J. Bacteriol.">
        <title>The genetic basis of laboratory adaptation in Caulobacter crescentus.</title>
        <authorList>
            <person name="Marks M.E."/>
            <person name="Castro-Rojas C.M."/>
            <person name="Teiling C."/>
            <person name="Du L."/>
            <person name="Kapatral V."/>
            <person name="Walunas T.L."/>
            <person name="Crosson S."/>
        </authorList>
    </citation>
    <scope>NUCLEOTIDE SEQUENCE [LARGE SCALE GENOMIC DNA]</scope>
    <source>
        <strain>NA1000 / CB15N</strain>
    </source>
</reference>
<accession>B8GXC6</accession>